<gene>
    <name type="ORF">ARB_04467</name>
</gene>
<dbReference type="EC" id="2.4.1.-" evidence="2"/>
<dbReference type="EC" id="3.2.1.58" evidence="2"/>
<dbReference type="EMBL" id="ABSU01000001">
    <property type="protein sequence ID" value="EFE36940.1"/>
    <property type="molecule type" value="Genomic_DNA"/>
</dbReference>
<dbReference type="RefSeq" id="XP_003017585.1">
    <property type="nucleotide sequence ID" value="XM_003017539.1"/>
</dbReference>
<dbReference type="SMR" id="D4AJL7"/>
<dbReference type="STRING" id="663331.D4AJL7"/>
<dbReference type="GeneID" id="9522430"/>
<dbReference type="KEGG" id="abe:ARB_04467"/>
<dbReference type="eggNOG" id="ENOG502QPYU">
    <property type="taxonomic scope" value="Eukaryota"/>
</dbReference>
<dbReference type="HOGENOM" id="CLU_004624_0_1_1"/>
<dbReference type="OMA" id="GWDMQDL"/>
<dbReference type="OrthoDB" id="62120at2759"/>
<dbReference type="Proteomes" id="UP000008866">
    <property type="component" value="Unassembled WGS sequence"/>
</dbReference>
<dbReference type="GO" id="GO:0009986">
    <property type="term" value="C:cell surface"/>
    <property type="evidence" value="ECO:0007669"/>
    <property type="project" value="TreeGrafter"/>
</dbReference>
<dbReference type="GO" id="GO:0005576">
    <property type="term" value="C:extracellular region"/>
    <property type="evidence" value="ECO:0007669"/>
    <property type="project" value="UniProtKB-SubCell"/>
</dbReference>
<dbReference type="GO" id="GO:0004338">
    <property type="term" value="F:glucan exo-1,3-beta-glucosidase activity"/>
    <property type="evidence" value="ECO:0007669"/>
    <property type="project" value="UniProtKB-EC"/>
</dbReference>
<dbReference type="GO" id="GO:0016740">
    <property type="term" value="F:transferase activity"/>
    <property type="evidence" value="ECO:0007669"/>
    <property type="project" value="UniProtKB-KW"/>
</dbReference>
<dbReference type="GO" id="GO:0007155">
    <property type="term" value="P:cell adhesion"/>
    <property type="evidence" value="ECO:0007669"/>
    <property type="project" value="UniProtKB-KW"/>
</dbReference>
<dbReference type="GO" id="GO:0071555">
    <property type="term" value="P:cell wall organization"/>
    <property type="evidence" value="ECO:0007669"/>
    <property type="project" value="UniProtKB-KW"/>
</dbReference>
<dbReference type="GO" id="GO:0009251">
    <property type="term" value="P:glucan catabolic process"/>
    <property type="evidence" value="ECO:0007669"/>
    <property type="project" value="TreeGrafter"/>
</dbReference>
<dbReference type="Gene3D" id="3.20.20.80">
    <property type="entry name" value="Glycosidases"/>
    <property type="match status" value="1"/>
</dbReference>
<dbReference type="InterPro" id="IPR001547">
    <property type="entry name" value="Glyco_hydro_5"/>
</dbReference>
<dbReference type="InterPro" id="IPR017853">
    <property type="entry name" value="Glycoside_hydrolase_SF"/>
</dbReference>
<dbReference type="InterPro" id="IPR050386">
    <property type="entry name" value="Glycosyl_hydrolase_5"/>
</dbReference>
<dbReference type="PANTHER" id="PTHR31297:SF1">
    <property type="entry name" value="GLUCAN 1,3-BETA-GLUCOSIDASE I_II-RELATED"/>
    <property type="match status" value="1"/>
</dbReference>
<dbReference type="PANTHER" id="PTHR31297">
    <property type="entry name" value="GLUCAN ENDO-1,6-BETA-GLUCOSIDASE B"/>
    <property type="match status" value="1"/>
</dbReference>
<dbReference type="Pfam" id="PF00150">
    <property type="entry name" value="Cellulase"/>
    <property type="match status" value="1"/>
</dbReference>
<dbReference type="SUPFAM" id="SSF51445">
    <property type="entry name" value="(Trans)glycosidases"/>
    <property type="match status" value="1"/>
</dbReference>
<evidence type="ECO:0000250" key="1">
    <source>
        <dbReference type="UniProtKB" id="O85465"/>
    </source>
</evidence>
<evidence type="ECO:0000250" key="2">
    <source>
        <dbReference type="UniProtKB" id="P29717"/>
    </source>
</evidence>
<evidence type="ECO:0000255" key="3"/>
<evidence type="ECO:0000269" key="4">
    <source>
    </source>
</evidence>
<evidence type="ECO:0000269" key="5">
    <source>
    </source>
</evidence>
<evidence type="ECO:0000305" key="6"/>
<protein>
    <recommendedName>
        <fullName evidence="6">Probable glucan 1,3-beta-glucosidase ARB_04467</fullName>
        <ecNumber evidence="2">2.4.1.-</ecNumber>
        <ecNumber evidence="2">3.2.1.58</ecNumber>
    </recommendedName>
    <alternativeName>
        <fullName evidence="2">Exo-1,3-beta-glucanase</fullName>
    </alternativeName>
</protein>
<name>EXG1_ARTBC</name>
<feature type="signal peptide" evidence="3">
    <location>
        <begin position="1"/>
        <end position="17"/>
    </location>
</feature>
<feature type="chain" id="PRO_5003053255" description="Probable glucan 1,3-beta-glucosidase ARB_04467">
    <location>
        <begin position="18"/>
        <end position="413"/>
    </location>
</feature>
<feature type="active site" description="Proton donor" evidence="1">
    <location>
        <position position="202"/>
    </location>
</feature>
<feature type="active site" description="Nucleophile" evidence="2">
    <location>
        <position position="300"/>
    </location>
</feature>
<feature type="binding site" evidence="2">
    <location>
        <position position="46"/>
    </location>
    <ligand>
        <name>substrate</name>
    </ligand>
</feature>
<feature type="binding site" evidence="2">
    <location>
        <position position="202"/>
    </location>
    <ligand>
        <name>substrate</name>
    </ligand>
</feature>
<feature type="binding site" evidence="2">
    <location>
        <position position="262"/>
    </location>
    <ligand>
        <name>substrate</name>
    </ligand>
</feature>
<feature type="disulfide bond" evidence="2">
    <location>
        <begin position="282"/>
        <end position="412"/>
    </location>
</feature>
<keyword id="KW-0130">Cell adhesion</keyword>
<keyword id="KW-0134">Cell wall</keyword>
<keyword id="KW-0961">Cell wall biogenesis/degradation</keyword>
<keyword id="KW-1015">Disulfide bond</keyword>
<keyword id="KW-0326">Glycosidase</keyword>
<keyword id="KW-0378">Hydrolase</keyword>
<keyword id="KW-1185">Reference proteome</keyword>
<keyword id="KW-0964">Secreted</keyword>
<keyword id="KW-0732">Signal</keyword>
<keyword id="KW-0808">Transferase</keyword>
<proteinExistence type="evidence at protein level"/>
<reference key="1">
    <citation type="journal article" date="2011" name="Genome Biol.">
        <title>Comparative and functional genomics provide insights into the pathogenicity of dermatophytic fungi.</title>
        <authorList>
            <person name="Burmester A."/>
            <person name="Shelest E."/>
            <person name="Gloeckner G."/>
            <person name="Heddergott C."/>
            <person name="Schindler S."/>
            <person name="Staib P."/>
            <person name="Heidel A."/>
            <person name="Felder M."/>
            <person name="Petzold A."/>
            <person name="Szafranski K."/>
            <person name="Feuermann M."/>
            <person name="Pedruzzi I."/>
            <person name="Priebe S."/>
            <person name="Groth M."/>
            <person name="Winkler R."/>
            <person name="Li W."/>
            <person name="Kniemeyer O."/>
            <person name="Schroeckh V."/>
            <person name="Hertweck C."/>
            <person name="Hube B."/>
            <person name="White T.C."/>
            <person name="Platzer M."/>
            <person name="Guthke R."/>
            <person name="Heitman J."/>
            <person name="Woestemeyer J."/>
            <person name="Zipfel P.F."/>
            <person name="Monod M."/>
            <person name="Brakhage A.A."/>
        </authorList>
    </citation>
    <scope>NUCLEOTIDE SEQUENCE [LARGE SCALE GENOMIC DNA]</scope>
    <scope>IDENTIFICATION BY MASS SPECTROMETRY</scope>
    <scope>SUBCELLULAR LOCATION</scope>
    <scope>INDUCTION</scope>
    <source>
        <strain>ATCC MYA-4681 / CBS 112371</strain>
    </source>
</reference>
<reference key="2">
    <citation type="journal article" date="2011" name="Proteomics">
        <title>Identification of novel secreted proteases during extracellular proteolysis by dermatophytes at acidic pH.</title>
        <authorList>
            <person name="Sriranganadane D."/>
            <person name="Waridel P."/>
            <person name="Salamin K."/>
            <person name="Feuermann M."/>
            <person name="Mignon B."/>
            <person name="Staib P."/>
            <person name="Neuhaus J.M."/>
            <person name="Quadroni M."/>
            <person name="Monod M."/>
        </authorList>
    </citation>
    <scope>IDENTIFICATION BY MASS SPECTROMETRY</scope>
    <scope>SUBCELLULAR LOCATION</scope>
</reference>
<organism>
    <name type="scientific">Arthroderma benhamiae (strain ATCC MYA-4681 / CBS 112371)</name>
    <name type="common">Trichophyton mentagrophytes</name>
    <dbReference type="NCBI Taxonomy" id="663331"/>
    <lineage>
        <taxon>Eukaryota</taxon>
        <taxon>Fungi</taxon>
        <taxon>Dikarya</taxon>
        <taxon>Ascomycota</taxon>
        <taxon>Pezizomycotina</taxon>
        <taxon>Eurotiomycetes</taxon>
        <taxon>Eurotiomycetidae</taxon>
        <taxon>Onygenales</taxon>
        <taxon>Arthrodermataceae</taxon>
        <taxon>Trichophyton</taxon>
    </lineage>
</organism>
<accession>D4AJL7</accession>
<comment type="function">
    <text evidence="2">Major glucan 1,3-beta-glucosidase required for cell wall integrity (By similarity). Beta-glucanases participate in the metabolism of beta-glucan, the main structural component of the cell wall (By similarity). Can also function biosynthetically as a transglycosylase (By similarity). Functions to deliver glucan from the cell to the extracellular matrix (By similarity). Involved in cell-substrate and cell-cell adhesion (By similarity).</text>
</comment>
<comment type="catalytic activity">
    <reaction evidence="2">
        <text>Successive hydrolysis of beta-D-glucose units from the non-reducing ends of (1-&gt;3)-beta-D-glucans, releasing alpha-glucose.</text>
        <dbReference type="EC" id="3.2.1.58"/>
    </reaction>
</comment>
<comment type="subunit">
    <text evidence="2">Monomer.</text>
</comment>
<comment type="subcellular location">
    <subcellularLocation>
        <location evidence="4 5">Secreted</location>
    </subcellularLocation>
    <subcellularLocation>
        <location evidence="2">Secreted</location>
        <location evidence="2">Cell wall</location>
    </subcellularLocation>
    <text evidence="2">Is non-covalently attached to the cell wall.</text>
</comment>
<comment type="induction">
    <text evidence="4">Expression is down-regulated in presence of human keratinocytes.</text>
</comment>
<comment type="similarity">
    <text evidence="6">Belongs to the glycosyl hydrolase 5 (cellulase A) family.</text>
</comment>
<sequence>MKFGSLLGLSLVGLSVASPVTNVWKSPRAADDFIRGVNLGGWLVLEPWITPGIFEEGGDSAVDEWTLSAALGHRAHERLKLHWNTFMEQKDFDRIKGAGLTHVRIPIGYWAVAPIQGEPFVQGQVDMLDAAIDWARHSGLKVNVDLHGAPGSQNGFDNSGRLGPANWQKGDTVAQTYKALDVLIQRYAKKDGVVDEINLINEPFPQAGIQVEPLKDYYRQGAAKVKSANPNVAVVISDAFMGPSKWNGFDVGAKTIIDTHHYQVFSPQLVAMDINQHVKAACDFGNDELAKSSIPAIVGEWCGALTDCTQYLNGRHEGARYDGTHKDSDPKTAVPNGCVRKTGGSASQLTDEEKTNTRRYIEAQLDSFSKGHGWFWWTWKTERGSPGWDLNDLLSNGLFPQPLDSRMFLGQCN</sequence>